<comment type="function">
    <text evidence="4">Thiol-disulfide oxidoreductase that poorly activates chloroplastic malate dehydrogenase (NADP-MDH) and fructose-1,6-bisphosphatase. Provides reducing equivalents for peroxiredoxin Q.</text>
</comment>
<comment type="subcellular location">
    <subcellularLocation>
        <location evidence="4 5">Plastid</location>
        <location evidence="4 5">Chloroplast stroma</location>
    </subcellularLocation>
</comment>
<comment type="tissue specificity">
    <text evidence="4">Expressed in leaves.</text>
</comment>
<comment type="developmental stage">
    <text evidence="4">Expression decreases in developing seeds and increases during seed germination.</text>
</comment>
<comment type="induction">
    <text evidence="4">By light in leaves.</text>
</comment>
<comment type="similarity">
    <text evidence="6">Belongs to the thioredoxin family. Plant Y-type subfamily.</text>
</comment>
<comment type="sequence caution" evidence="6">
    <conflict type="erroneous gene model prediction">
        <sequence resource="EMBL-CDS" id="AAD39273"/>
    </conflict>
</comment>
<gene>
    <name type="ordered locus">At1g43560</name>
    <name type="ORF">T10P12.4</name>
</gene>
<organism>
    <name type="scientific">Arabidopsis thaliana</name>
    <name type="common">Mouse-ear cress</name>
    <dbReference type="NCBI Taxonomy" id="3702"/>
    <lineage>
        <taxon>Eukaryota</taxon>
        <taxon>Viridiplantae</taxon>
        <taxon>Streptophyta</taxon>
        <taxon>Embryophyta</taxon>
        <taxon>Tracheophyta</taxon>
        <taxon>Spermatophyta</taxon>
        <taxon>Magnoliopsida</taxon>
        <taxon>eudicotyledons</taxon>
        <taxon>Gunneridae</taxon>
        <taxon>Pentapetalae</taxon>
        <taxon>rosids</taxon>
        <taxon>malvids</taxon>
        <taxon>Brassicales</taxon>
        <taxon>Brassicaceae</taxon>
        <taxon>Camelineae</taxon>
        <taxon>Arabidopsis</taxon>
    </lineage>
</organism>
<proteinExistence type="evidence at transcript level"/>
<evidence type="ECO:0000250" key="1"/>
<evidence type="ECO:0000255" key="2"/>
<evidence type="ECO:0000255" key="3">
    <source>
        <dbReference type="PROSITE-ProRule" id="PRU00691"/>
    </source>
</evidence>
<evidence type="ECO:0000269" key="4">
    <source>
    </source>
</evidence>
<evidence type="ECO:0000269" key="5">
    <source>
    </source>
</evidence>
<evidence type="ECO:0000305" key="6"/>
<dbReference type="EMBL" id="AC007203">
    <property type="protein sequence ID" value="AAD39273.1"/>
    <property type="status" value="ALT_SEQ"/>
    <property type="molecule type" value="Genomic_DNA"/>
</dbReference>
<dbReference type="EMBL" id="CP002684">
    <property type="protein sequence ID" value="AEE31970.1"/>
    <property type="molecule type" value="Genomic_DNA"/>
</dbReference>
<dbReference type="EMBL" id="AY128276">
    <property type="protein sequence ID" value="AAM91085.1"/>
    <property type="molecule type" value="mRNA"/>
</dbReference>
<dbReference type="EMBL" id="BT014871">
    <property type="protein sequence ID" value="AAT41854.1"/>
    <property type="molecule type" value="mRNA"/>
</dbReference>
<dbReference type="PIR" id="A96499">
    <property type="entry name" value="A96499"/>
</dbReference>
<dbReference type="RefSeq" id="NP_175021.2">
    <property type="nucleotide sequence ID" value="NM_103481.4"/>
</dbReference>
<dbReference type="SMR" id="Q8L7S9"/>
<dbReference type="FunCoup" id="Q8L7S9">
    <property type="interactions" value="2661"/>
</dbReference>
<dbReference type="IntAct" id="Q8L7S9">
    <property type="interactions" value="72"/>
</dbReference>
<dbReference type="STRING" id="3702.Q8L7S9"/>
<dbReference type="PaxDb" id="3702-AT1G43560.1"/>
<dbReference type="ProteomicsDB" id="232349"/>
<dbReference type="EnsemblPlants" id="AT1G43560.1">
    <property type="protein sequence ID" value="AT1G43560.1"/>
    <property type="gene ID" value="AT1G43560"/>
</dbReference>
<dbReference type="GeneID" id="840939"/>
<dbReference type="Gramene" id="AT1G43560.1">
    <property type="protein sequence ID" value="AT1G43560.1"/>
    <property type="gene ID" value="AT1G43560"/>
</dbReference>
<dbReference type="KEGG" id="ath:AT1G43560"/>
<dbReference type="Araport" id="AT1G43560"/>
<dbReference type="TAIR" id="AT1G43560">
    <property type="gene designation" value="TY2"/>
</dbReference>
<dbReference type="eggNOG" id="KOG0910">
    <property type="taxonomic scope" value="Eukaryota"/>
</dbReference>
<dbReference type="HOGENOM" id="CLU_090389_0_3_1"/>
<dbReference type="InParanoid" id="Q8L7S9"/>
<dbReference type="OMA" id="NIANCYQ"/>
<dbReference type="OrthoDB" id="2121326at2759"/>
<dbReference type="PhylomeDB" id="Q8L7S9"/>
<dbReference type="PRO" id="PR:Q8L7S9"/>
<dbReference type="Proteomes" id="UP000006548">
    <property type="component" value="Chromosome 1"/>
</dbReference>
<dbReference type="ExpressionAtlas" id="Q8L7S9">
    <property type="expression patterns" value="baseline and differential"/>
</dbReference>
<dbReference type="GO" id="GO:0009507">
    <property type="term" value="C:chloroplast"/>
    <property type="evidence" value="ECO:0000314"/>
    <property type="project" value="UniProtKB"/>
</dbReference>
<dbReference type="GO" id="GO:0009570">
    <property type="term" value="C:chloroplast stroma"/>
    <property type="evidence" value="ECO:0007005"/>
    <property type="project" value="TAIR"/>
</dbReference>
<dbReference type="GO" id="GO:0005634">
    <property type="term" value="C:nucleus"/>
    <property type="evidence" value="ECO:0007005"/>
    <property type="project" value="TAIR"/>
</dbReference>
<dbReference type="GO" id="GO:0008047">
    <property type="term" value="F:enzyme activator activity"/>
    <property type="evidence" value="ECO:0000314"/>
    <property type="project" value="UniProtKB"/>
</dbReference>
<dbReference type="GO" id="GO:0015035">
    <property type="term" value="F:protein-disulfide reductase activity"/>
    <property type="evidence" value="ECO:0000314"/>
    <property type="project" value="UniProtKB"/>
</dbReference>
<dbReference type="GO" id="GO:0043085">
    <property type="term" value="P:positive regulation of catalytic activity"/>
    <property type="evidence" value="ECO:0000314"/>
    <property type="project" value="UniProtKB"/>
</dbReference>
<dbReference type="GO" id="GO:0009416">
    <property type="term" value="P:response to light stimulus"/>
    <property type="evidence" value="ECO:0000270"/>
    <property type="project" value="UniProtKB"/>
</dbReference>
<dbReference type="CDD" id="cd02947">
    <property type="entry name" value="TRX_family"/>
    <property type="match status" value="1"/>
</dbReference>
<dbReference type="FunFam" id="3.40.30.10:FF:000001">
    <property type="entry name" value="Thioredoxin"/>
    <property type="match status" value="1"/>
</dbReference>
<dbReference type="Gene3D" id="3.40.30.10">
    <property type="entry name" value="Glutaredoxin"/>
    <property type="match status" value="1"/>
</dbReference>
<dbReference type="InterPro" id="IPR005746">
    <property type="entry name" value="Thioredoxin"/>
</dbReference>
<dbReference type="InterPro" id="IPR036249">
    <property type="entry name" value="Thioredoxin-like_sf"/>
</dbReference>
<dbReference type="InterPro" id="IPR017937">
    <property type="entry name" value="Thioredoxin_CS"/>
</dbReference>
<dbReference type="InterPro" id="IPR013766">
    <property type="entry name" value="Thioredoxin_domain"/>
</dbReference>
<dbReference type="NCBIfam" id="TIGR01068">
    <property type="entry name" value="thioredoxin"/>
    <property type="match status" value="1"/>
</dbReference>
<dbReference type="PANTHER" id="PTHR45663">
    <property type="entry name" value="GEO12009P1"/>
    <property type="match status" value="1"/>
</dbReference>
<dbReference type="PANTHER" id="PTHR45663:SF25">
    <property type="entry name" value="THIOREDOXIN Y2, CHLOROPLASTIC"/>
    <property type="match status" value="1"/>
</dbReference>
<dbReference type="Pfam" id="PF00085">
    <property type="entry name" value="Thioredoxin"/>
    <property type="match status" value="1"/>
</dbReference>
<dbReference type="PRINTS" id="PR00421">
    <property type="entry name" value="THIOREDOXIN"/>
</dbReference>
<dbReference type="SUPFAM" id="SSF52833">
    <property type="entry name" value="Thioredoxin-like"/>
    <property type="match status" value="1"/>
</dbReference>
<dbReference type="PROSITE" id="PS00194">
    <property type="entry name" value="THIOREDOXIN_1"/>
    <property type="match status" value="1"/>
</dbReference>
<dbReference type="PROSITE" id="PS51352">
    <property type="entry name" value="THIOREDOXIN_2"/>
    <property type="match status" value="1"/>
</dbReference>
<sequence>MAISLATAYISPCFTPESSNSASPSRTLSSVRLPSQIRRFGSVQSPSSSTRFAPLTVRAAKKQTFNSFDDLLQNSDKPVLVDFYATWCGPCQLMVPILNEVSETLKDIIAVVKIDTEKYPSLANKYQIEALPTFILFKDGKLWDRFEGALPANQLVERIENSLQVKQ</sequence>
<accession>Q8L7S9</accession>
<accession>Q9XIG4</accession>
<feature type="transit peptide" description="Chloroplast" evidence="2">
    <location>
        <begin position="1"/>
        <end position="58"/>
    </location>
</feature>
<feature type="chain" id="PRO_0000394540" description="Thioredoxin Y2, chloroplastic">
    <location>
        <begin position="59"/>
        <end position="167"/>
    </location>
</feature>
<feature type="domain" description="Thioredoxin" evidence="3">
    <location>
        <begin position="59"/>
        <end position="164"/>
    </location>
</feature>
<feature type="active site" description="Nucleophile" evidence="1">
    <location>
        <position position="88"/>
    </location>
</feature>
<feature type="active site" description="Nucleophile" evidence="1">
    <location>
        <position position="91"/>
    </location>
</feature>
<feature type="site" description="Deprotonates C-terminal active site Cys" evidence="1">
    <location>
        <position position="82"/>
    </location>
</feature>
<feature type="site" description="Contributes to redox potential value" evidence="1">
    <location>
        <position position="89"/>
    </location>
</feature>
<feature type="site" description="Contributes to redox potential value" evidence="1">
    <location>
        <position position="90"/>
    </location>
</feature>
<feature type="disulfide bond" description="Redox-active" evidence="3">
    <location>
        <begin position="88"/>
        <end position="91"/>
    </location>
</feature>
<keyword id="KW-0150">Chloroplast</keyword>
<keyword id="KW-1015">Disulfide bond</keyword>
<keyword id="KW-0249">Electron transport</keyword>
<keyword id="KW-0934">Plastid</keyword>
<keyword id="KW-0676">Redox-active center</keyword>
<keyword id="KW-1185">Reference proteome</keyword>
<keyword id="KW-0809">Transit peptide</keyword>
<keyword id="KW-0813">Transport</keyword>
<protein>
    <recommendedName>
        <fullName>Thioredoxin Y2, chloroplastic</fullName>
        <shortName>AtTrxy2</shortName>
    </recommendedName>
</protein>
<name>TRXY2_ARATH</name>
<reference key="1">
    <citation type="journal article" date="2000" name="Nature">
        <title>Sequence and analysis of chromosome 1 of the plant Arabidopsis thaliana.</title>
        <authorList>
            <person name="Theologis A."/>
            <person name="Ecker J.R."/>
            <person name="Palm C.J."/>
            <person name="Federspiel N.A."/>
            <person name="Kaul S."/>
            <person name="White O."/>
            <person name="Alonso J."/>
            <person name="Altafi H."/>
            <person name="Araujo R."/>
            <person name="Bowman C.L."/>
            <person name="Brooks S.Y."/>
            <person name="Buehler E."/>
            <person name="Chan A."/>
            <person name="Chao Q."/>
            <person name="Chen H."/>
            <person name="Cheuk R.F."/>
            <person name="Chin C.W."/>
            <person name="Chung M.K."/>
            <person name="Conn L."/>
            <person name="Conway A.B."/>
            <person name="Conway A.R."/>
            <person name="Creasy T.H."/>
            <person name="Dewar K."/>
            <person name="Dunn P."/>
            <person name="Etgu P."/>
            <person name="Feldblyum T.V."/>
            <person name="Feng J.-D."/>
            <person name="Fong B."/>
            <person name="Fujii C.Y."/>
            <person name="Gill J.E."/>
            <person name="Goldsmith A.D."/>
            <person name="Haas B."/>
            <person name="Hansen N.F."/>
            <person name="Hughes B."/>
            <person name="Huizar L."/>
            <person name="Hunter J.L."/>
            <person name="Jenkins J."/>
            <person name="Johnson-Hopson C."/>
            <person name="Khan S."/>
            <person name="Khaykin E."/>
            <person name="Kim C.J."/>
            <person name="Koo H.L."/>
            <person name="Kremenetskaia I."/>
            <person name="Kurtz D.B."/>
            <person name="Kwan A."/>
            <person name="Lam B."/>
            <person name="Langin-Hooper S."/>
            <person name="Lee A."/>
            <person name="Lee J.M."/>
            <person name="Lenz C.A."/>
            <person name="Li J.H."/>
            <person name="Li Y.-P."/>
            <person name="Lin X."/>
            <person name="Liu S.X."/>
            <person name="Liu Z.A."/>
            <person name="Luros J.S."/>
            <person name="Maiti R."/>
            <person name="Marziali A."/>
            <person name="Militscher J."/>
            <person name="Miranda M."/>
            <person name="Nguyen M."/>
            <person name="Nierman W.C."/>
            <person name="Osborne B.I."/>
            <person name="Pai G."/>
            <person name="Peterson J."/>
            <person name="Pham P.K."/>
            <person name="Rizzo M."/>
            <person name="Rooney T."/>
            <person name="Rowley D."/>
            <person name="Sakano H."/>
            <person name="Salzberg S.L."/>
            <person name="Schwartz J.R."/>
            <person name="Shinn P."/>
            <person name="Southwick A.M."/>
            <person name="Sun H."/>
            <person name="Tallon L.J."/>
            <person name="Tambunga G."/>
            <person name="Toriumi M.J."/>
            <person name="Town C.D."/>
            <person name="Utterback T."/>
            <person name="Van Aken S."/>
            <person name="Vaysberg M."/>
            <person name="Vysotskaia V.S."/>
            <person name="Walker M."/>
            <person name="Wu D."/>
            <person name="Yu G."/>
            <person name="Fraser C.M."/>
            <person name="Venter J.C."/>
            <person name="Davis R.W."/>
        </authorList>
    </citation>
    <scope>NUCLEOTIDE SEQUENCE [LARGE SCALE GENOMIC DNA]</scope>
    <source>
        <strain>cv. Columbia</strain>
    </source>
</reference>
<reference key="2">
    <citation type="journal article" date="2017" name="Plant J.">
        <title>Araport11: a complete reannotation of the Arabidopsis thaliana reference genome.</title>
        <authorList>
            <person name="Cheng C.Y."/>
            <person name="Krishnakumar V."/>
            <person name="Chan A.P."/>
            <person name="Thibaud-Nissen F."/>
            <person name="Schobel S."/>
            <person name="Town C.D."/>
        </authorList>
    </citation>
    <scope>GENOME REANNOTATION</scope>
    <source>
        <strain>cv. Columbia</strain>
    </source>
</reference>
<reference key="3">
    <citation type="journal article" date="2003" name="Science">
        <title>Empirical analysis of transcriptional activity in the Arabidopsis genome.</title>
        <authorList>
            <person name="Yamada K."/>
            <person name="Lim J."/>
            <person name="Dale J.M."/>
            <person name="Chen H."/>
            <person name="Shinn P."/>
            <person name="Palm C.J."/>
            <person name="Southwick A.M."/>
            <person name="Wu H.C."/>
            <person name="Kim C.J."/>
            <person name="Nguyen M."/>
            <person name="Pham P.K."/>
            <person name="Cheuk R.F."/>
            <person name="Karlin-Newmann G."/>
            <person name="Liu S.X."/>
            <person name="Lam B."/>
            <person name="Sakano H."/>
            <person name="Wu T."/>
            <person name="Yu G."/>
            <person name="Miranda M."/>
            <person name="Quach H.L."/>
            <person name="Tripp M."/>
            <person name="Chang C.H."/>
            <person name="Lee J.M."/>
            <person name="Toriumi M.J."/>
            <person name="Chan M.M."/>
            <person name="Tang C.C."/>
            <person name="Onodera C.S."/>
            <person name="Deng J.M."/>
            <person name="Akiyama K."/>
            <person name="Ansari Y."/>
            <person name="Arakawa T."/>
            <person name="Banh J."/>
            <person name="Banno F."/>
            <person name="Bowser L."/>
            <person name="Brooks S.Y."/>
            <person name="Carninci P."/>
            <person name="Chao Q."/>
            <person name="Choy N."/>
            <person name="Enju A."/>
            <person name="Goldsmith A.D."/>
            <person name="Gurjal M."/>
            <person name="Hansen N.F."/>
            <person name="Hayashizaki Y."/>
            <person name="Johnson-Hopson C."/>
            <person name="Hsuan V.W."/>
            <person name="Iida K."/>
            <person name="Karnes M."/>
            <person name="Khan S."/>
            <person name="Koesema E."/>
            <person name="Ishida J."/>
            <person name="Jiang P.X."/>
            <person name="Jones T."/>
            <person name="Kawai J."/>
            <person name="Kamiya A."/>
            <person name="Meyers C."/>
            <person name="Nakajima M."/>
            <person name="Narusaka M."/>
            <person name="Seki M."/>
            <person name="Sakurai T."/>
            <person name="Satou M."/>
            <person name="Tamse R."/>
            <person name="Vaysberg M."/>
            <person name="Wallender E.K."/>
            <person name="Wong C."/>
            <person name="Yamamura Y."/>
            <person name="Yuan S."/>
            <person name="Shinozaki K."/>
            <person name="Davis R.W."/>
            <person name="Theologis A."/>
            <person name="Ecker J.R."/>
        </authorList>
    </citation>
    <scope>NUCLEOTIDE SEQUENCE [LARGE SCALE MRNA]</scope>
    <source>
        <strain>cv. Columbia</strain>
    </source>
</reference>
<reference key="4">
    <citation type="submission" date="2004-06" db="EMBL/GenBank/DDBJ databases">
        <title>Arabidopsis ORF clones.</title>
        <authorList>
            <person name="Cheuk R.F."/>
            <person name="Chen H."/>
            <person name="Kim C.J."/>
            <person name="Shinn P."/>
            <person name="Ecker J.R."/>
        </authorList>
    </citation>
    <scope>NUCLEOTIDE SEQUENCE [LARGE SCALE MRNA]</scope>
    <source>
        <strain>cv. Columbia</strain>
    </source>
</reference>
<reference key="5">
    <citation type="journal article" date="2004" name="Plant Physiol.">
        <title>Characterization of plastidial thioredoxins from Arabidopsis belonging to the new y-type.</title>
        <authorList>
            <person name="Collin V."/>
            <person name="Lamkemeyer P."/>
            <person name="Miginiac-Maslow M."/>
            <person name="Hirasawa M."/>
            <person name="Knaff D.B."/>
            <person name="Dietz K.J."/>
            <person name="Issakidis-Bourguet E."/>
        </authorList>
    </citation>
    <scope>FUNCTION</scope>
    <scope>SUBCELLULAR LOCATION</scope>
    <scope>TISSUE SPECIFICITY</scope>
    <scope>DEVELOPMENTAL STAGE</scope>
    <scope>INDUCTION</scope>
</reference>
<reference key="6">
    <citation type="journal article" date="2009" name="Mol. Plant">
        <title>Comparative genomic study of the thioredoxin family in photosynthetic organisms with emphasis on Populus trichocarpa.</title>
        <authorList>
            <person name="Chibani K."/>
            <person name="Wingsle G."/>
            <person name="Jacquot J.P."/>
            <person name="Gelhaye E."/>
            <person name="Rouhier N."/>
        </authorList>
    </citation>
    <scope>GENE FAMILY</scope>
    <scope>NOMENCLATURE</scope>
</reference>
<reference key="7">
    <citation type="journal article" date="2009" name="Plant Mol. Biol.">
        <title>A novel extended family of stromal thioredoxins.</title>
        <authorList>
            <person name="Cain P."/>
            <person name="Hall M."/>
            <person name="Schroder W.P."/>
            <person name="Kieselbach T."/>
            <person name="Robinson C."/>
        </authorList>
    </citation>
    <scope>SUBCELLULAR LOCATION</scope>
</reference>